<dbReference type="EC" id="2.1.1.228"/>
<dbReference type="EMBL" id="AE008691">
    <property type="protein sequence ID" value="AAM24680.1"/>
    <property type="molecule type" value="Genomic_DNA"/>
</dbReference>
<dbReference type="RefSeq" id="WP_011025725.1">
    <property type="nucleotide sequence ID" value="NC_003869.1"/>
</dbReference>
<dbReference type="SMR" id="Q8R5S2"/>
<dbReference type="STRING" id="273068.TTE1458"/>
<dbReference type="KEGG" id="tte:TTE1458"/>
<dbReference type="eggNOG" id="COG0336">
    <property type="taxonomic scope" value="Bacteria"/>
</dbReference>
<dbReference type="HOGENOM" id="CLU_047363_0_1_9"/>
<dbReference type="OrthoDB" id="9807416at2"/>
<dbReference type="Proteomes" id="UP000000555">
    <property type="component" value="Chromosome"/>
</dbReference>
<dbReference type="GO" id="GO:0005829">
    <property type="term" value="C:cytosol"/>
    <property type="evidence" value="ECO:0007669"/>
    <property type="project" value="TreeGrafter"/>
</dbReference>
<dbReference type="GO" id="GO:0052906">
    <property type="term" value="F:tRNA (guanine(37)-N1)-methyltransferase activity"/>
    <property type="evidence" value="ECO:0007669"/>
    <property type="project" value="UniProtKB-UniRule"/>
</dbReference>
<dbReference type="GO" id="GO:0002939">
    <property type="term" value="P:tRNA N1-guanine methylation"/>
    <property type="evidence" value="ECO:0007669"/>
    <property type="project" value="TreeGrafter"/>
</dbReference>
<dbReference type="CDD" id="cd18080">
    <property type="entry name" value="TrmD-like"/>
    <property type="match status" value="1"/>
</dbReference>
<dbReference type="FunFam" id="1.10.1270.20:FF:000001">
    <property type="entry name" value="tRNA (guanine-N(1)-)-methyltransferase"/>
    <property type="match status" value="1"/>
</dbReference>
<dbReference type="FunFam" id="3.40.1280.10:FF:000001">
    <property type="entry name" value="tRNA (guanine-N(1)-)-methyltransferase"/>
    <property type="match status" value="1"/>
</dbReference>
<dbReference type="Gene3D" id="3.40.1280.10">
    <property type="match status" value="1"/>
</dbReference>
<dbReference type="Gene3D" id="1.10.1270.20">
    <property type="entry name" value="tRNA(m1g37)methyltransferase, domain 2"/>
    <property type="match status" value="1"/>
</dbReference>
<dbReference type="HAMAP" id="MF_00605">
    <property type="entry name" value="TrmD"/>
    <property type="match status" value="1"/>
</dbReference>
<dbReference type="InterPro" id="IPR029028">
    <property type="entry name" value="Alpha/beta_knot_MTases"/>
</dbReference>
<dbReference type="InterPro" id="IPR023148">
    <property type="entry name" value="tRNA_m1G_MeTrfase_C_sf"/>
</dbReference>
<dbReference type="InterPro" id="IPR002649">
    <property type="entry name" value="tRNA_m1G_MeTrfase_TrmD"/>
</dbReference>
<dbReference type="InterPro" id="IPR029026">
    <property type="entry name" value="tRNA_m1G_MTases_N"/>
</dbReference>
<dbReference type="InterPro" id="IPR016009">
    <property type="entry name" value="tRNA_MeTrfase_TRMD/TRM10"/>
</dbReference>
<dbReference type="NCBIfam" id="NF000648">
    <property type="entry name" value="PRK00026.1"/>
    <property type="match status" value="1"/>
</dbReference>
<dbReference type="NCBIfam" id="TIGR00088">
    <property type="entry name" value="trmD"/>
    <property type="match status" value="1"/>
</dbReference>
<dbReference type="PANTHER" id="PTHR46417">
    <property type="entry name" value="TRNA (GUANINE-N(1)-)-METHYLTRANSFERASE"/>
    <property type="match status" value="1"/>
</dbReference>
<dbReference type="PANTHER" id="PTHR46417:SF1">
    <property type="entry name" value="TRNA (GUANINE-N(1)-)-METHYLTRANSFERASE"/>
    <property type="match status" value="1"/>
</dbReference>
<dbReference type="Pfam" id="PF01746">
    <property type="entry name" value="tRNA_m1G_MT"/>
    <property type="match status" value="1"/>
</dbReference>
<dbReference type="PIRSF" id="PIRSF000386">
    <property type="entry name" value="tRNA_mtase"/>
    <property type="match status" value="1"/>
</dbReference>
<dbReference type="SUPFAM" id="SSF75217">
    <property type="entry name" value="alpha/beta knot"/>
    <property type="match status" value="1"/>
</dbReference>
<accession>Q8R5S2</accession>
<keyword id="KW-0963">Cytoplasm</keyword>
<keyword id="KW-0489">Methyltransferase</keyword>
<keyword id="KW-1185">Reference proteome</keyword>
<keyword id="KW-0949">S-adenosyl-L-methionine</keyword>
<keyword id="KW-0808">Transferase</keyword>
<keyword id="KW-0819">tRNA processing</keyword>
<name>TRMD_CALS4</name>
<sequence>MIFDVLTLFPEMFECVLSHSILKRAVEKSKLKVNLINIRDFSKDKHKRVDDYPYGGGPGMVMMPQPLFDAIEFVKSQGNIPVYYLSPKGKIFTQEMARELSKMERIALLCGHYEGIDERVYAVIDGEISIGDFILTGGELAAMVVIDAVTRLIDGVLSHPQSALEESFSDYLLEYPQYTRPEVFRGMRVPEVLLSGNHAEIARWRRQKSLEITLLKRPDLLKKANLTEEDKKFLREKGYEI</sequence>
<protein>
    <recommendedName>
        <fullName>tRNA (guanine-N(1)-)-methyltransferase</fullName>
        <ecNumber>2.1.1.228</ecNumber>
    </recommendedName>
    <alternativeName>
        <fullName>M1G-methyltransferase</fullName>
    </alternativeName>
    <alternativeName>
        <fullName>tRNA [GM37] methyltransferase</fullName>
    </alternativeName>
</protein>
<feature type="chain" id="PRO_0000060483" description="tRNA (guanine-N(1)-)-methyltransferase">
    <location>
        <begin position="1"/>
        <end position="241"/>
    </location>
</feature>
<feature type="binding site" evidence="1">
    <location>
        <position position="111"/>
    </location>
    <ligand>
        <name>S-adenosyl-L-methionine</name>
        <dbReference type="ChEBI" id="CHEBI:59789"/>
    </ligand>
</feature>
<feature type="binding site" evidence="1">
    <location>
        <begin position="130"/>
        <end position="135"/>
    </location>
    <ligand>
        <name>S-adenosyl-L-methionine</name>
        <dbReference type="ChEBI" id="CHEBI:59789"/>
    </ligand>
</feature>
<gene>
    <name type="primary">trmD</name>
    <name type="ordered locus">TTE1458</name>
</gene>
<reference key="1">
    <citation type="journal article" date="2002" name="Genome Res.">
        <title>A complete sequence of the T. tengcongensis genome.</title>
        <authorList>
            <person name="Bao Q."/>
            <person name="Tian Y."/>
            <person name="Li W."/>
            <person name="Xu Z."/>
            <person name="Xuan Z."/>
            <person name="Hu S."/>
            <person name="Dong W."/>
            <person name="Yang J."/>
            <person name="Chen Y."/>
            <person name="Xue Y."/>
            <person name="Xu Y."/>
            <person name="Lai X."/>
            <person name="Huang L."/>
            <person name="Dong X."/>
            <person name="Ma Y."/>
            <person name="Ling L."/>
            <person name="Tan H."/>
            <person name="Chen R."/>
            <person name="Wang J."/>
            <person name="Yu J."/>
            <person name="Yang H."/>
        </authorList>
    </citation>
    <scope>NUCLEOTIDE SEQUENCE [LARGE SCALE GENOMIC DNA]</scope>
    <source>
        <strain>DSM 15242 / JCM 11007 / NBRC 100824 / MB4</strain>
    </source>
</reference>
<organism>
    <name type="scientific">Caldanaerobacter subterraneus subsp. tengcongensis (strain DSM 15242 / JCM 11007 / NBRC 100824 / MB4)</name>
    <name type="common">Thermoanaerobacter tengcongensis</name>
    <dbReference type="NCBI Taxonomy" id="273068"/>
    <lineage>
        <taxon>Bacteria</taxon>
        <taxon>Bacillati</taxon>
        <taxon>Bacillota</taxon>
        <taxon>Clostridia</taxon>
        <taxon>Thermoanaerobacterales</taxon>
        <taxon>Thermoanaerobacteraceae</taxon>
        <taxon>Caldanaerobacter</taxon>
    </lineage>
</organism>
<evidence type="ECO:0000250" key="1"/>
<evidence type="ECO:0000305" key="2"/>
<comment type="function">
    <text evidence="1">Specifically methylates guanosine-37 in various tRNAs.</text>
</comment>
<comment type="catalytic activity">
    <reaction>
        <text>guanosine(37) in tRNA + S-adenosyl-L-methionine = N(1)-methylguanosine(37) in tRNA + S-adenosyl-L-homocysteine + H(+)</text>
        <dbReference type="Rhea" id="RHEA:36899"/>
        <dbReference type="Rhea" id="RHEA-COMP:10145"/>
        <dbReference type="Rhea" id="RHEA-COMP:10147"/>
        <dbReference type="ChEBI" id="CHEBI:15378"/>
        <dbReference type="ChEBI" id="CHEBI:57856"/>
        <dbReference type="ChEBI" id="CHEBI:59789"/>
        <dbReference type="ChEBI" id="CHEBI:73542"/>
        <dbReference type="ChEBI" id="CHEBI:74269"/>
        <dbReference type="EC" id="2.1.1.228"/>
    </reaction>
</comment>
<comment type="subunit">
    <text evidence="1">Homodimer.</text>
</comment>
<comment type="subcellular location">
    <subcellularLocation>
        <location evidence="2">Cytoplasm</location>
    </subcellularLocation>
</comment>
<comment type="similarity">
    <text evidence="2">Belongs to the RNA methyltransferase TrmD family.</text>
</comment>
<proteinExistence type="inferred from homology"/>